<reference key="1">
    <citation type="journal article" date="2000" name="Nucleic Acids Res.">
        <title>Complete genome sequence of the alkaliphilic bacterium Bacillus halodurans and genomic sequence comparison with Bacillus subtilis.</title>
        <authorList>
            <person name="Takami H."/>
            <person name="Nakasone K."/>
            <person name="Takaki Y."/>
            <person name="Maeno G."/>
            <person name="Sasaki R."/>
            <person name="Masui N."/>
            <person name="Fuji F."/>
            <person name="Hirama C."/>
            <person name="Nakamura Y."/>
            <person name="Ogasawara N."/>
            <person name="Kuhara S."/>
            <person name="Horikoshi K."/>
        </authorList>
    </citation>
    <scope>NUCLEOTIDE SEQUENCE [LARGE SCALE GENOMIC DNA]</scope>
    <source>
        <strain>ATCC BAA-125 / DSM 18197 / FERM 7344 / JCM 9153 / C-125</strain>
    </source>
</reference>
<accession>Q9KED4</accession>
<proteinExistence type="inferred from homology"/>
<comment type="function">
    <text evidence="1">Catalyzes reversively the conversion of L-aspartate beta-semialdehyde (ASA) to L-2,4-diaminobutyrate (DABA) by transamination with L-glutamate.</text>
</comment>
<comment type="catalytic activity">
    <reaction>
        <text>L-2,4-diaminobutanoate + 2-oxoglutarate = L-aspartate 4-semialdehyde + L-glutamate</text>
        <dbReference type="Rhea" id="RHEA:11160"/>
        <dbReference type="ChEBI" id="CHEBI:16810"/>
        <dbReference type="ChEBI" id="CHEBI:29985"/>
        <dbReference type="ChEBI" id="CHEBI:58761"/>
        <dbReference type="ChEBI" id="CHEBI:537519"/>
        <dbReference type="EC" id="2.6.1.76"/>
    </reaction>
</comment>
<comment type="cofactor">
    <cofactor evidence="1">
        <name>pyridoxal 5'-phosphate</name>
        <dbReference type="ChEBI" id="CHEBI:597326"/>
    </cofactor>
</comment>
<comment type="pathway">
    <text>Amine and polyamine biosynthesis; ectoine biosynthesis; L-ectoine from L-aspartate 4-semialdehyde: step 1/3.</text>
</comment>
<comment type="similarity">
    <text evidence="3">Belongs to the class-III pyridoxal-phosphate-dependent aminotransferase family.</text>
</comment>
<protein>
    <recommendedName>
        <fullName>Diaminobutyrate--2-oxoglutarate transaminase</fullName>
        <ecNumber>2.6.1.76</ecNumber>
    </recommendedName>
    <alternativeName>
        <fullName>DABA aminotransferase</fullName>
    </alternativeName>
    <alternativeName>
        <fullName>Diaminobutyrate--2-oxoglutarate aminotransferase</fullName>
    </alternativeName>
    <alternativeName>
        <fullName>L-2,4-diaminobutyric acid transaminase</fullName>
    </alternativeName>
</protein>
<keyword id="KW-0032">Aminotransferase</keyword>
<keyword id="KW-0663">Pyridoxal phosphate</keyword>
<keyword id="KW-1185">Reference proteome</keyword>
<keyword id="KW-0808">Transferase</keyword>
<sequence>MSQTDMNVFEQLESEVRSYCRSFPTVFTKAKGYKMWDEAGKEYIDFFSGAGALNYGHNDEKMKKALVDYIMDDGITHSLDMATTPKGKFLQKFHDVILKPRNLDYKVMFPGPTGTNTVESALKLARKVTGRTDIISFTNGFHGMTIGSLSVTGNSFKRKGAGIPLTNVVTMPYDNFVSESLDTLDYLERFLEDGGSGVEIPAAMILETVQGEGGINAARTEWLQRVEKICKRWGILLIIDDVQAGVGRTGTFFSFEDAGITPDIVCLSKSIGGFGLPLAITLFRPELDIWAPGEHNGTFRGNNHAFVTATEALSYWEDDSFEKDIQEKSATISDFLVKLVTEYPEIKGEVKGKGFMVGIASDVEGFASKVTEEAFSRGLIMETSGPNDEVFKLFPPLTIDDEGLEKGLAIIEESIKALVETKELVMQ</sequence>
<gene>
    <name type="primary">ectB</name>
    <name type="ordered locus">BH0919</name>
</gene>
<evidence type="ECO:0000250" key="1"/>
<evidence type="ECO:0000255" key="2"/>
<evidence type="ECO:0000305" key="3"/>
<organism>
    <name type="scientific">Halalkalibacterium halodurans (strain ATCC BAA-125 / DSM 18197 / FERM 7344 / JCM 9153 / C-125)</name>
    <name type="common">Bacillus halodurans</name>
    <dbReference type="NCBI Taxonomy" id="272558"/>
    <lineage>
        <taxon>Bacteria</taxon>
        <taxon>Bacillati</taxon>
        <taxon>Bacillota</taxon>
        <taxon>Bacilli</taxon>
        <taxon>Bacillales</taxon>
        <taxon>Bacillaceae</taxon>
        <taxon>Halalkalibacterium (ex Joshi et al. 2022)</taxon>
    </lineage>
</organism>
<feature type="chain" id="PRO_0000120517" description="Diaminobutyrate--2-oxoglutarate transaminase">
    <location>
        <begin position="1"/>
        <end position="427"/>
    </location>
</feature>
<feature type="modified residue" description="N6-(pyridoxal phosphate)lysine" evidence="2">
    <location>
        <position position="269"/>
    </location>
</feature>
<dbReference type="EC" id="2.6.1.76"/>
<dbReference type="EMBL" id="BA000004">
    <property type="protein sequence ID" value="BAB04638.1"/>
    <property type="molecule type" value="Genomic_DNA"/>
</dbReference>
<dbReference type="PIR" id="G83764">
    <property type="entry name" value="G83764"/>
</dbReference>
<dbReference type="RefSeq" id="WP_010897091.1">
    <property type="nucleotide sequence ID" value="NC_002570.2"/>
</dbReference>
<dbReference type="SMR" id="Q9KED4"/>
<dbReference type="STRING" id="272558.gene:10726793"/>
<dbReference type="GeneID" id="87596462"/>
<dbReference type="KEGG" id="bha:BH0919"/>
<dbReference type="eggNOG" id="COG0160">
    <property type="taxonomic scope" value="Bacteria"/>
</dbReference>
<dbReference type="HOGENOM" id="CLU_016922_10_0_9"/>
<dbReference type="OrthoDB" id="9807885at2"/>
<dbReference type="UniPathway" id="UPA00067">
    <property type="reaction ID" value="UER00121"/>
</dbReference>
<dbReference type="Proteomes" id="UP000001258">
    <property type="component" value="Chromosome"/>
</dbReference>
<dbReference type="GO" id="GO:0045303">
    <property type="term" value="F:diaminobutyrate-2-oxoglutarate transaminase activity"/>
    <property type="evidence" value="ECO:0007669"/>
    <property type="project" value="UniProtKB-EC"/>
</dbReference>
<dbReference type="GO" id="GO:0047307">
    <property type="term" value="F:diaminobutyrate-pyruvate transaminase activity"/>
    <property type="evidence" value="ECO:0007669"/>
    <property type="project" value="InterPro"/>
</dbReference>
<dbReference type="GO" id="GO:0030170">
    <property type="term" value="F:pyridoxal phosphate binding"/>
    <property type="evidence" value="ECO:0007669"/>
    <property type="project" value="InterPro"/>
</dbReference>
<dbReference type="GO" id="GO:0019491">
    <property type="term" value="P:ectoine biosynthetic process"/>
    <property type="evidence" value="ECO:0007669"/>
    <property type="project" value="UniProtKB-UniPathway"/>
</dbReference>
<dbReference type="CDD" id="cd00610">
    <property type="entry name" value="OAT_like"/>
    <property type="match status" value="1"/>
</dbReference>
<dbReference type="Gene3D" id="3.90.1150.10">
    <property type="entry name" value="Aspartate Aminotransferase, domain 1"/>
    <property type="match status" value="1"/>
</dbReference>
<dbReference type="Gene3D" id="3.40.640.10">
    <property type="entry name" value="Type I PLP-dependent aspartate aminotransferase-like (Major domain)"/>
    <property type="match status" value="1"/>
</dbReference>
<dbReference type="InterPro" id="IPR005814">
    <property type="entry name" value="Aminotrans_3"/>
</dbReference>
<dbReference type="InterPro" id="IPR049704">
    <property type="entry name" value="Aminotrans_3_PPA_site"/>
</dbReference>
<dbReference type="InterPro" id="IPR004637">
    <property type="entry name" value="Dat"/>
</dbReference>
<dbReference type="InterPro" id="IPR012773">
    <property type="entry name" value="Ectoine_EctB"/>
</dbReference>
<dbReference type="InterPro" id="IPR015424">
    <property type="entry name" value="PyrdxlP-dep_Trfase"/>
</dbReference>
<dbReference type="InterPro" id="IPR015421">
    <property type="entry name" value="PyrdxlP-dep_Trfase_major"/>
</dbReference>
<dbReference type="InterPro" id="IPR015422">
    <property type="entry name" value="PyrdxlP-dep_Trfase_small"/>
</dbReference>
<dbReference type="NCBIfam" id="TIGR00709">
    <property type="entry name" value="dat"/>
    <property type="match status" value="1"/>
</dbReference>
<dbReference type="NCBIfam" id="TIGR02407">
    <property type="entry name" value="ectoine_ectB"/>
    <property type="match status" value="1"/>
</dbReference>
<dbReference type="NCBIfam" id="NF006733">
    <property type="entry name" value="PRK09264.1"/>
    <property type="match status" value="1"/>
</dbReference>
<dbReference type="PANTHER" id="PTHR43552">
    <property type="entry name" value="DIAMINOBUTYRATE--2-OXOGLUTARATE AMINOTRANSFERASE"/>
    <property type="match status" value="1"/>
</dbReference>
<dbReference type="PANTHER" id="PTHR43552:SF2">
    <property type="entry name" value="DIAMINOBUTYRATE--2-OXOGLUTARATE TRANSAMINASE"/>
    <property type="match status" value="1"/>
</dbReference>
<dbReference type="Pfam" id="PF00202">
    <property type="entry name" value="Aminotran_3"/>
    <property type="match status" value="1"/>
</dbReference>
<dbReference type="PIRSF" id="PIRSF000521">
    <property type="entry name" value="Transaminase_4ab_Lys_Orn"/>
    <property type="match status" value="1"/>
</dbReference>
<dbReference type="SUPFAM" id="SSF53383">
    <property type="entry name" value="PLP-dependent transferases"/>
    <property type="match status" value="1"/>
</dbReference>
<dbReference type="PROSITE" id="PS00600">
    <property type="entry name" value="AA_TRANSFER_CLASS_3"/>
    <property type="match status" value="1"/>
</dbReference>
<name>ECTB_HALH5</name>